<evidence type="ECO:0000250" key="1"/>
<evidence type="ECO:0000255" key="2">
    <source>
        <dbReference type="HAMAP-Rule" id="MF_00118"/>
    </source>
</evidence>
<comment type="function">
    <text evidence="2">GTP hydrolase that promotes the GTP-dependent binding of aminoacyl-tRNA to the A-site of ribosomes during protein biosynthesis.</text>
</comment>
<comment type="catalytic activity">
    <reaction evidence="2">
        <text>GTP + H2O = GDP + phosphate + H(+)</text>
        <dbReference type="Rhea" id="RHEA:19669"/>
        <dbReference type="ChEBI" id="CHEBI:15377"/>
        <dbReference type="ChEBI" id="CHEBI:15378"/>
        <dbReference type="ChEBI" id="CHEBI:37565"/>
        <dbReference type="ChEBI" id="CHEBI:43474"/>
        <dbReference type="ChEBI" id="CHEBI:58189"/>
        <dbReference type="EC" id="3.6.5.3"/>
    </reaction>
    <physiologicalReaction direction="left-to-right" evidence="2">
        <dbReference type="Rhea" id="RHEA:19670"/>
    </physiologicalReaction>
</comment>
<comment type="subunit">
    <text evidence="2">Monomer.</text>
</comment>
<comment type="subcellular location">
    <subcellularLocation>
        <location>Cytoplasm</location>
    </subcellularLocation>
</comment>
<comment type="similarity">
    <text evidence="2">Belongs to the TRAFAC class translation factor GTPase superfamily. Classic translation factor GTPase family. EF-Tu/EF-1A subfamily.</text>
</comment>
<name>EFTU_SHEPU</name>
<dbReference type="EC" id="3.6.5.3" evidence="2"/>
<dbReference type="PIR" id="E60663">
    <property type="entry name" value="E60663"/>
</dbReference>
<dbReference type="RefSeq" id="WP_011787562.1">
    <property type="nucleotide sequence ID" value="NZ_CP028435.1"/>
</dbReference>
<dbReference type="SMR" id="P33169"/>
<dbReference type="GeneID" id="67441758"/>
<dbReference type="OMA" id="EGDKEWG"/>
<dbReference type="GO" id="GO:0005829">
    <property type="term" value="C:cytosol"/>
    <property type="evidence" value="ECO:0007669"/>
    <property type="project" value="TreeGrafter"/>
</dbReference>
<dbReference type="GO" id="GO:0005525">
    <property type="term" value="F:GTP binding"/>
    <property type="evidence" value="ECO:0007669"/>
    <property type="project" value="UniProtKB-UniRule"/>
</dbReference>
<dbReference type="GO" id="GO:0003924">
    <property type="term" value="F:GTPase activity"/>
    <property type="evidence" value="ECO:0007669"/>
    <property type="project" value="InterPro"/>
</dbReference>
<dbReference type="GO" id="GO:0097216">
    <property type="term" value="F:guanosine tetraphosphate binding"/>
    <property type="evidence" value="ECO:0007669"/>
    <property type="project" value="UniProtKB-ARBA"/>
</dbReference>
<dbReference type="GO" id="GO:0003746">
    <property type="term" value="F:translation elongation factor activity"/>
    <property type="evidence" value="ECO:0007669"/>
    <property type="project" value="UniProtKB-UniRule"/>
</dbReference>
<dbReference type="CDD" id="cd01884">
    <property type="entry name" value="EF_Tu"/>
    <property type="match status" value="1"/>
</dbReference>
<dbReference type="CDD" id="cd03697">
    <property type="entry name" value="EFTU_II"/>
    <property type="match status" value="1"/>
</dbReference>
<dbReference type="CDD" id="cd03707">
    <property type="entry name" value="EFTU_III"/>
    <property type="match status" value="1"/>
</dbReference>
<dbReference type="FunFam" id="2.40.30.10:FF:000001">
    <property type="entry name" value="Elongation factor Tu"/>
    <property type="match status" value="1"/>
</dbReference>
<dbReference type="FunFam" id="3.40.50.300:FF:000003">
    <property type="entry name" value="Elongation factor Tu"/>
    <property type="match status" value="1"/>
</dbReference>
<dbReference type="Gene3D" id="3.40.50.300">
    <property type="entry name" value="P-loop containing nucleotide triphosphate hydrolases"/>
    <property type="match status" value="1"/>
</dbReference>
<dbReference type="Gene3D" id="2.40.30.10">
    <property type="entry name" value="Translation factors"/>
    <property type="match status" value="2"/>
</dbReference>
<dbReference type="HAMAP" id="MF_00118_B">
    <property type="entry name" value="EF_Tu_B"/>
    <property type="match status" value="1"/>
</dbReference>
<dbReference type="InterPro" id="IPR041709">
    <property type="entry name" value="EF-Tu_GTP-bd"/>
</dbReference>
<dbReference type="InterPro" id="IPR050055">
    <property type="entry name" value="EF-Tu_GTPase"/>
</dbReference>
<dbReference type="InterPro" id="IPR004161">
    <property type="entry name" value="EFTu-like_2"/>
</dbReference>
<dbReference type="InterPro" id="IPR033720">
    <property type="entry name" value="EFTU_2"/>
</dbReference>
<dbReference type="InterPro" id="IPR031157">
    <property type="entry name" value="G_TR_CS"/>
</dbReference>
<dbReference type="InterPro" id="IPR027417">
    <property type="entry name" value="P-loop_NTPase"/>
</dbReference>
<dbReference type="InterPro" id="IPR005225">
    <property type="entry name" value="Small_GTP-bd"/>
</dbReference>
<dbReference type="InterPro" id="IPR000795">
    <property type="entry name" value="T_Tr_GTP-bd_dom"/>
</dbReference>
<dbReference type="InterPro" id="IPR009000">
    <property type="entry name" value="Transl_B-barrel_sf"/>
</dbReference>
<dbReference type="InterPro" id="IPR009001">
    <property type="entry name" value="Transl_elong_EF1A/Init_IF2_C"/>
</dbReference>
<dbReference type="InterPro" id="IPR004541">
    <property type="entry name" value="Transl_elong_EFTu/EF1A_bac/org"/>
</dbReference>
<dbReference type="InterPro" id="IPR004160">
    <property type="entry name" value="Transl_elong_EFTu/EF1A_C"/>
</dbReference>
<dbReference type="NCBIfam" id="TIGR00485">
    <property type="entry name" value="EF-Tu"/>
    <property type="match status" value="1"/>
</dbReference>
<dbReference type="NCBIfam" id="NF000766">
    <property type="entry name" value="PRK00049.1"/>
    <property type="match status" value="1"/>
</dbReference>
<dbReference type="NCBIfam" id="NF009372">
    <property type="entry name" value="PRK12735.1"/>
    <property type="match status" value="1"/>
</dbReference>
<dbReference type="NCBIfam" id="NF009373">
    <property type="entry name" value="PRK12736.1"/>
    <property type="match status" value="1"/>
</dbReference>
<dbReference type="NCBIfam" id="TIGR00231">
    <property type="entry name" value="small_GTP"/>
    <property type="match status" value="1"/>
</dbReference>
<dbReference type="PANTHER" id="PTHR43721:SF22">
    <property type="entry name" value="ELONGATION FACTOR TU, MITOCHONDRIAL"/>
    <property type="match status" value="1"/>
</dbReference>
<dbReference type="PANTHER" id="PTHR43721">
    <property type="entry name" value="ELONGATION FACTOR TU-RELATED"/>
    <property type="match status" value="1"/>
</dbReference>
<dbReference type="Pfam" id="PF00009">
    <property type="entry name" value="GTP_EFTU"/>
    <property type="match status" value="1"/>
</dbReference>
<dbReference type="Pfam" id="PF03144">
    <property type="entry name" value="GTP_EFTU_D2"/>
    <property type="match status" value="1"/>
</dbReference>
<dbReference type="Pfam" id="PF03143">
    <property type="entry name" value="GTP_EFTU_D3"/>
    <property type="match status" value="1"/>
</dbReference>
<dbReference type="PRINTS" id="PR00315">
    <property type="entry name" value="ELONGATNFCT"/>
</dbReference>
<dbReference type="SUPFAM" id="SSF50465">
    <property type="entry name" value="EF-Tu/eEF-1alpha/eIF2-gamma C-terminal domain"/>
    <property type="match status" value="1"/>
</dbReference>
<dbReference type="SUPFAM" id="SSF52540">
    <property type="entry name" value="P-loop containing nucleoside triphosphate hydrolases"/>
    <property type="match status" value="1"/>
</dbReference>
<dbReference type="SUPFAM" id="SSF50447">
    <property type="entry name" value="Translation proteins"/>
    <property type="match status" value="1"/>
</dbReference>
<dbReference type="PROSITE" id="PS00301">
    <property type="entry name" value="G_TR_1"/>
    <property type="match status" value="1"/>
</dbReference>
<dbReference type="PROSITE" id="PS51722">
    <property type="entry name" value="G_TR_2"/>
    <property type="match status" value="1"/>
</dbReference>
<organism>
    <name type="scientific">Shewanella putrefaciens</name>
    <name type="common">Pseudomonas putrefaciens</name>
    <dbReference type="NCBI Taxonomy" id="24"/>
    <lineage>
        <taxon>Bacteria</taxon>
        <taxon>Pseudomonadati</taxon>
        <taxon>Pseudomonadota</taxon>
        <taxon>Gammaproteobacteria</taxon>
        <taxon>Alteromonadales</taxon>
        <taxon>Shewanellaceae</taxon>
        <taxon>Shewanella</taxon>
    </lineage>
</organism>
<gene>
    <name evidence="2" type="primary">tuf</name>
</gene>
<feature type="chain" id="PRO_0000091385" description="Elongation factor Tu">
    <location>
        <begin position="1"/>
        <end position="394"/>
    </location>
</feature>
<feature type="domain" description="tr-type G">
    <location>
        <begin position="10"/>
        <end position="204"/>
    </location>
</feature>
<feature type="region of interest" description="G1" evidence="1">
    <location>
        <begin position="19"/>
        <end position="26"/>
    </location>
</feature>
<feature type="region of interest" description="G2" evidence="1">
    <location>
        <begin position="60"/>
        <end position="64"/>
    </location>
</feature>
<feature type="region of interest" description="G3" evidence="1">
    <location>
        <begin position="81"/>
        <end position="84"/>
    </location>
</feature>
<feature type="region of interest" description="G4" evidence="1">
    <location>
        <begin position="136"/>
        <end position="139"/>
    </location>
</feature>
<feature type="region of interest" description="G5" evidence="1">
    <location>
        <begin position="174"/>
        <end position="176"/>
    </location>
</feature>
<feature type="binding site" evidence="2">
    <location>
        <begin position="19"/>
        <end position="26"/>
    </location>
    <ligand>
        <name>GTP</name>
        <dbReference type="ChEBI" id="CHEBI:37565"/>
    </ligand>
</feature>
<feature type="binding site" evidence="2">
    <location>
        <position position="26"/>
    </location>
    <ligand>
        <name>Mg(2+)</name>
        <dbReference type="ChEBI" id="CHEBI:18420"/>
    </ligand>
</feature>
<feature type="binding site" evidence="2">
    <location>
        <begin position="81"/>
        <end position="85"/>
    </location>
    <ligand>
        <name>GTP</name>
        <dbReference type="ChEBI" id="CHEBI:37565"/>
    </ligand>
</feature>
<feature type="binding site" evidence="2">
    <location>
        <begin position="136"/>
        <end position="139"/>
    </location>
    <ligand>
        <name>GTP</name>
        <dbReference type="ChEBI" id="CHEBI:37565"/>
    </ligand>
</feature>
<proteinExistence type="inferred from homology"/>
<reference key="1">
    <citation type="journal article" date="1990" name="Arch. Microbiol.">
        <title>Complete nucleotide sequences of seven eubacterial genes coding for the elongation factor Tu: functional, structural and phylogenetic evaluations.</title>
        <authorList>
            <person name="Ludwig W."/>
            <person name="Weizenegger M."/>
            <person name="Betzl D."/>
            <person name="Leidel E."/>
            <person name="Lenz T."/>
            <person name="Ludvigsen A."/>
            <person name="Moellenhoff D."/>
            <person name="Wenzig P."/>
            <person name="Schleifer K.H."/>
        </authorList>
    </citation>
    <scope>NUCLEOTIDE SEQUENCE [GENOMIC DNA]</scope>
</reference>
<sequence>MAKAKFERIKPHVNVGTIGHVDHGKTTLTAAISHVLAKTYGGEAKDFSQIDNAPEERERGITINTSHIEYDTPSRHYAHVDCPGHADYVKNMITGAAQMDGAILVVASTDGPMPQTREHILLSRQVGVPFIIVFMNKCDMVDDEELLELVEMEVRELLSEYDFPGDDLPVIQGSALKALEGEPEWEAKILELAAALDSYIPEPQRDIDKPFLLPIEDVFSISGRGTVVTGRVERGIVRVGDEVEIVGVRATTKTTCTGVEMFRKLLDEGRAGENCGILLRGTKRDDVERGQVLAKPGSINPHTTFESEVYVLSKEEGGRHTPFFKGYRPQFYFRTTDVTGTIELPEGVEMVMPGDNIKMVVTLICPIAMDEGLRFAIREGGRTVGAGVVAKIIA</sequence>
<protein>
    <recommendedName>
        <fullName evidence="2">Elongation factor Tu</fullName>
        <shortName evidence="2">EF-Tu</shortName>
        <ecNumber evidence="2">3.6.5.3</ecNumber>
    </recommendedName>
</protein>
<accession>P33169</accession>
<keyword id="KW-0963">Cytoplasm</keyword>
<keyword id="KW-0251">Elongation factor</keyword>
<keyword id="KW-0342">GTP-binding</keyword>
<keyword id="KW-0378">Hydrolase</keyword>
<keyword id="KW-0460">Magnesium</keyword>
<keyword id="KW-0479">Metal-binding</keyword>
<keyword id="KW-0547">Nucleotide-binding</keyword>
<keyword id="KW-0648">Protein biosynthesis</keyword>